<feature type="chain" id="PRO_1000124360" description="GTPase Der">
    <location>
        <begin position="1"/>
        <end position="504"/>
    </location>
</feature>
<feature type="domain" description="EngA-type G 1">
    <location>
        <begin position="3"/>
        <end position="166"/>
    </location>
</feature>
<feature type="domain" description="EngA-type G 2">
    <location>
        <begin position="216"/>
        <end position="389"/>
    </location>
</feature>
<feature type="domain" description="KH-like" evidence="1">
    <location>
        <begin position="390"/>
        <end position="474"/>
    </location>
</feature>
<feature type="region of interest" description="Disordered" evidence="2">
    <location>
        <begin position="171"/>
        <end position="190"/>
    </location>
</feature>
<feature type="compositionally biased region" description="Acidic residues" evidence="2">
    <location>
        <begin position="172"/>
        <end position="190"/>
    </location>
</feature>
<feature type="binding site" evidence="1">
    <location>
        <begin position="9"/>
        <end position="16"/>
    </location>
    <ligand>
        <name>GTP</name>
        <dbReference type="ChEBI" id="CHEBI:37565"/>
        <label>1</label>
    </ligand>
</feature>
<feature type="binding site" evidence="1">
    <location>
        <begin position="56"/>
        <end position="60"/>
    </location>
    <ligand>
        <name>GTP</name>
        <dbReference type="ChEBI" id="CHEBI:37565"/>
        <label>1</label>
    </ligand>
</feature>
<feature type="binding site" evidence="1">
    <location>
        <begin position="118"/>
        <end position="121"/>
    </location>
    <ligand>
        <name>GTP</name>
        <dbReference type="ChEBI" id="CHEBI:37565"/>
        <label>1</label>
    </ligand>
</feature>
<feature type="binding site" evidence="1">
    <location>
        <begin position="222"/>
        <end position="229"/>
    </location>
    <ligand>
        <name>GTP</name>
        <dbReference type="ChEBI" id="CHEBI:37565"/>
        <label>2</label>
    </ligand>
</feature>
<feature type="binding site" evidence="1">
    <location>
        <begin position="269"/>
        <end position="273"/>
    </location>
    <ligand>
        <name>GTP</name>
        <dbReference type="ChEBI" id="CHEBI:37565"/>
        <label>2</label>
    </ligand>
</feature>
<feature type="binding site" evidence="1">
    <location>
        <begin position="334"/>
        <end position="337"/>
    </location>
    <ligand>
        <name>GTP</name>
        <dbReference type="ChEBI" id="CHEBI:37565"/>
        <label>2</label>
    </ligand>
</feature>
<gene>
    <name evidence="1" type="primary">der</name>
    <name type="synonym">engA</name>
    <name type="ordered locus">HAPS_0734</name>
</gene>
<evidence type="ECO:0000255" key="1">
    <source>
        <dbReference type="HAMAP-Rule" id="MF_00195"/>
    </source>
</evidence>
<evidence type="ECO:0000256" key="2">
    <source>
        <dbReference type="SAM" id="MobiDB-lite"/>
    </source>
</evidence>
<keyword id="KW-0342">GTP-binding</keyword>
<keyword id="KW-0547">Nucleotide-binding</keyword>
<keyword id="KW-1185">Reference proteome</keyword>
<keyword id="KW-0677">Repeat</keyword>
<keyword id="KW-0690">Ribosome biogenesis</keyword>
<proteinExistence type="inferred from homology"/>
<organism>
    <name type="scientific">Glaesserella parasuis serovar 5 (strain SH0165)</name>
    <name type="common">Haemophilus parasuis</name>
    <dbReference type="NCBI Taxonomy" id="557723"/>
    <lineage>
        <taxon>Bacteria</taxon>
        <taxon>Pseudomonadati</taxon>
        <taxon>Pseudomonadota</taxon>
        <taxon>Gammaproteobacteria</taxon>
        <taxon>Pasteurellales</taxon>
        <taxon>Pasteurellaceae</taxon>
        <taxon>Glaesserella</taxon>
    </lineage>
</organism>
<dbReference type="EMBL" id="CP001321">
    <property type="protein sequence ID" value="ACL32379.1"/>
    <property type="molecule type" value="Genomic_DNA"/>
</dbReference>
<dbReference type="RefSeq" id="WP_010786672.1">
    <property type="nucleotide sequence ID" value="NC_011852.1"/>
</dbReference>
<dbReference type="SMR" id="B8F4X7"/>
<dbReference type="STRING" id="557723.HAPS_0734"/>
<dbReference type="GeneID" id="66619269"/>
<dbReference type="KEGG" id="hap:HAPS_0734"/>
<dbReference type="PATRIC" id="fig|557723.8.peg.734"/>
<dbReference type="HOGENOM" id="CLU_016077_5_1_6"/>
<dbReference type="Proteomes" id="UP000006743">
    <property type="component" value="Chromosome"/>
</dbReference>
<dbReference type="GO" id="GO:0016887">
    <property type="term" value="F:ATP hydrolysis activity"/>
    <property type="evidence" value="ECO:0007669"/>
    <property type="project" value="InterPro"/>
</dbReference>
<dbReference type="GO" id="GO:0005525">
    <property type="term" value="F:GTP binding"/>
    <property type="evidence" value="ECO:0007669"/>
    <property type="project" value="UniProtKB-UniRule"/>
</dbReference>
<dbReference type="GO" id="GO:0043022">
    <property type="term" value="F:ribosome binding"/>
    <property type="evidence" value="ECO:0007669"/>
    <property type="project" value="TreeGrafter"/>
</dbReference>
<dbReference type="GO" id="GO:0042254">
    <property type="term" value="P:ribosome biogenesis"/>
    <property type="evidence" value="ECO:0007669"/>
    <property type="project" value="UniProtKB-KW"/>
</dbReference>
<dbReference type="CDD" id="cd01894">
    <property type="entry name" value="EngA1"/>
    <property type="match status" value="1"/>
</dbReference>
<dbReference type="CDD" id="cd01895">
    <property type="entry name" value="EngA2"/>
    <property type="match status" value="1"/>
</dbReference>
<dbReference type="FunFam" id="3.30.300.20:FF:000004">
    <property type="entry name" value="GTPase Der"/>
    <property type="match status" value="1"/>
</dbReference>
<dbReference type="FunFam" id="3.40.50.300:FF:000040">
    <property type="entry name" value="GTPase Der"/>
    <property type="match status" value="1"/>
</dbReference>
<dbReference type="FunFam" id="3.40.50.300:FF:000057">
    <property type="entry name" value="GTPase Der"/>
    <property type="match status" value="1"/>
</dbReference>
<dbReference type="Gene3D" id="3.30.300.20">
    <property type="match status" value="1"/>
</dbReference>
<dbReference type="Gene3D" id="3.40.50.300">
    <property type="entry name" value="P-loop containing nucleotide triphosphate hydrolases"/>
    <property type="match status" value="2"/>
</dbReference>
<dbReference type="HAMAP" id="MF_00195">
    <property type="entry name" value="GTPase_Der"/>
    <property type="match status" value="1"/>
</dbReference>
<dbReference type="InterPro" id="IPR003593">
    <property type="entry name" value="AAA+_ATPase"/>
</dbReference>
<dbReference type="InterPro" id="IPR031166">
    <property type="entry name" value="G_ENGA"/>
</dbReference>
<dbReference type="InterPro" id="IPR006073">
    <property type="entry name" value="GTP-bd"/>
</dbReference>
<dbReference type="InterPro" id="IPR016484">
    <property type="entry name" value="GTPase_Der"/>
</dbReference>
<dbReference type="InterPro" id="IPR032859">
    <property type="entry name" value="KH_dom-like"/>
</dbReference>
<dbReference type="InterPro" id="IPR015946">
    <property type="entry name" value="KH_dom-like_a/b"/>
</dbReference>
<dbReference type="InterPro" id="IPR027417">
    <property type="entry name" value="P-loop_NTPase"/>
</dbReference>
<dbReference type="InterPro" id="IPR005225">
    <property type="entry name" value="Small_GTP-bd"/>
</dbReference>
<dbReference type="NCBIfam" id="TIGR03594">
    <property type="entry name" value="GTPase_EngA"/>
    <property type="match status" value="1"/>
</dbReference>
<dbReference type="NCBIfam" id="TIGR00231">
    <property type="entry name" value="small_GTP"/>
    <property type="match status" value="2"/>
</dbReference>
<dbReference type="PANTHER" id="PTHR43834">
    <property type="entry name" value="GTPASE DER"/>
    <property type="match status" value="1"/>
</dbReference>
<dbReference type="PANTHER" id="PTHR43834:SF6">
    <property type="entry name" value="GTPASE DER"/>
    <property type="match status" value="1"/>
</dbReference>
<dbReference type="Pfam" id="PF14714">
    <property type="entry name" value="KH_dom-like"/>
    <property type="match status" value="1"/>
</dbReference>
<dbReference type="Pfam" id="PF01926">
    <property type="entry name" value="MMR_HSR1"/>
    <property type="match status" value="2"/>
</dbReference>
<dbReference type="PIRSF" id="PIRSF006485">
    <property type="entry name" value="GTP-binding_EngA"/>
    <property type="match status" value="1"/>
</dbReference>
<dbReference type="PRINTS" id="PR00326">
    <property type="entry name" value="GTP1OBG"/>
</dbReference>
<dbReference type="SMART" id="SM00382">
    <property type="entry name" value="AAA"/>
    <property type="match status" value="2"/>
</dbReference>
<dbReference type="SMART" id="SM00173">
    <property type="entry name" value="RAS"/>
    <property type="match status" value="1"/>
</dbReference>
<dbReference type="SUPFAM" id="SSF52540">
    <property type="entry name" value="P-loop containing nucleoside triphosphate hydrolases"/>
    <property type="match status" value="2"/>
</dbReference>
<dbReference type="PROSITE" id="PS51712">
    <property type="entry name" value="G_ENGA"/>
    <property type="match status" value="2"/>
</dbReference>
<accession>B8F4X7</accession>
<name>DER_GLAP5</name>
<comment type="function">
    <text evidence="1">GTPase that plays an essential role in the late steps of ribosome biogenesis.</text>
</comment>
<comment type="subunit">
    <text evidence="1">Associates with the 50S ribosomal subunit.</text>
</comment>
<comment type="similarity">
    <text evidence="1">Belongs to the TRAFAC class TrmE-Era-EngA-EngB-Septin-like GTPase superfamily. EngA (Der) GTPase family.</text>
</comment>
<protein>
    <recommendedName>
        <fullName evidence="1">GTPase Der</fullName>
    </recommendedName>
    <alternativeName>
        <fullName evidence="1">GTP-binding protein EngA</fullName>
    </alternativeName>
</protein>
<sequence length="504" mass="55992">MTPVVALVGRPNVGKSTLFNRLTRTRNALVADFPGLTRDRKYGHANIAGHDFIVIDTGGIDGTEEGVEEKMAEQSLLAIKEADVVLFLVDARAGLLPADVGIAQYLRQRNKTTVVVANKTDGIDADSHIAEFYQLGLGEVEPIAAAQGRGVTQLIEQVLAPLAEKLEAQAVDSDENVADDEQDEWDSDFDFDNEEDTALLDEALEEDQEETDDKNIKIAIVGRPNVGKSTLTNRILGEERVVVYDMPGTTRDSIYIPMERDGQQYTIIDTAGVRKRGKVHLAVEKFSVIKTLQAIQDANVVLLTIDARDGVSDQDLSLLGFILNAGKSLVIVVNKWDGLSQDIKDNVKSELDRRLDFIDFARVHFISALHGSGVGNLFSSIQEAYQCATKKMTTSMLTRILQLAMDDHQPPLVNGRRVKLKYAHPGGYNPPIIVIHGNQIEKLPDSYKRYLSNYFRKSLKIIGSPIRVLFQEGNNPFAGKKNKLTPSQLRKRKRLMKFIKKSKR</sequence>
<reference key="1">
    <citation type="journal article" date="2009" name="J. Bacteriol.">
        <title>Complete genome sequence of Haemophilus parasuis SH0165.</title>
        <authorList>
            <person name="Yue M."/>
            <person name="Yang F."/>
            <person name="Yang J."/>
            <person name="Bei W."/>
            <person name="Cai X."/>
            <person name="Chen L."/>
            <person name="Dong J."/>
            <person name="Zhou R."/>
            <person name="Jin M."/>
            <person name="Jin Q."/>
            <person name="Chen H."/>
        </authorList>
    </citation>
    <scope>NUCLEOTIDE SEQUENCE [LARGE SCALE GENOMIC DNA]</scope>
    <source>
        <strain>SH0165</strain>
    </source>
</reference>